<protein>
    <recommendedName>
        <fullName>Heat shock-related 70 kDa protein 2</fullName>
        <shortName>Heat shock protein 70.2</shortName>
    </recommendedName>
</protein>
<evidence type="ECO:0000250" key="1"/>
<evidence type="ECO:0000250" key="2">
    <source>
        <dbReference type="UniProtKB" id="P11142"/>
    </source>
</evidence>
<evidence type="ECO:0000250" key="3">
    <source>
        <dbReference type="UniProtKB" id="P14659"/>
    </source>
</evidence>
<evidence type="ECO:0000250" key="4">
    <source>
        <dbReference type="UniProtKB" id="P54652"/>
    </source>
</evidence>
<evidence type="ECO:0000256" key="5">
    <source>
        <dbReference type="SAM" id="MobiDB-lite"/>
    </source>
</evidence>
<evidence type="ECO:0000269" key="6">
    <source>
    </source>
</evidence>
<evidence type="ECO:0000269" key="7">
    <source>
    </source>
</evidence>
<evidence type="ECO:0000269" key="8">
    <source>
    </source>
</evidence>
<evidence type="ECO:0000269" key="9">
    <source>
    </source>
</evidence>
<evidence type="ECO:0000269" key="10">
    <source>
    </source>
</evidence>
<evidence type="ECO:0000269" key="11">
    <source>
    </source>
</evidence>
<evidence type="ECO:0000305" key="12"/>
<sequence length="633" mass="69642">MSARGPAIGIDLGTTYSCVGVFQHGKVEIIANDQGNRTTPSYVAFTDTERLIGDAAKNQVAMNPTNTIFDAKRLIGRKFEDATVQSDMKHWPFRVVSEGGKPKVQVEYKGEMKTFFPEEISSMVLTKMKEIAEAYLGGKVQSAVITVPAYFNDSQRQATKDAGTITGLNVLRIINEPTAAAIAYGLDKKGCAGGEKNVLIFDLGGGTFDVSILTIEDGIFEVKSTAGDTHLGGEDFDNRMVSHLAEEFKRKHKKDIGPNKRAVRRLRTACERAKRTLSSSTQASIEIDSLYEGVDFYTSITRARFEELNADLFRGTLEPVEKALRDAKLDKGQIQEIVLVGGSTRIPKIQKLLQDFFNGKELNKSINPDEAVAYGAAVQAAILIGDKSENVQDLLLLDVTPLSLGIETAGGVMTPLIKRNTTIPTKQTQTFTTYSDNQSSVLVQVYEGERAMTKDNNLLGKFDLTGIPPAPRGVPQIEVTFDIDANGILNVTAADKSTGKENKITITNDKGRLSKDDIDRMVQEAERYKSEDEANRDRVAAKNAVESYTYNIKQTVEDEKLRGKISEQDKNKILDKCQEVINWLDRNQMAEKDEYEHKQKELERVCNPIISKLYQGGPGGGGSSGGPTIEEVD</sequence>
<reference key="1">
    <citation type="journal article" date="1988" name="Mol. Cell. Biol.">
        <title>Identification and sequence analysis of a new member of the mouse HSP70 gene family and characterization of its unique cellular and developmental pattern of expression in the male germ line.</title>
        <authorList>
            <person name="Zakeri Z.F."/>
            <person name="Wolgemuth D.J."/>
            <person name="Hunt C.R."/>
        </authorList>
    </citation>
    <scope>NUCLEOTIDE SEQUENCE [GENOMIC DNA]</scope>
    <scope>TISSUE SPECIFICITY</scope>
    <scope>DEVELOPMENTAL STAGE</scope>
</reference>
<reference key="2">
    <citation type="submission" date="2005-09" db="EMBL/GenBank/DDBJ databases">
        <authorList>
            <person name="Mural R.J."/>
            <person name="Adams M.D."/>
            <person name="Myers E.W."/>
            <person name="Smith H.O."/>
            <person name="Venter J.C."/>
        </authorList>
    </citation>
    <scope>NUCLEOTIDE SEQUENCE [LARGE SCALE GENOMIC DNA]</scope>
</reference>
<reference key="3">
    <citation type="journal article" date="2004" name="Genome Res.">
        <title>The status, quality, and expansion of the NIH full-length cDNA project: the Mammalian Gene Collection (MGC).</title>
        <authorList>
            <consortium name="The MGC Project Team"/>
        </authorList>
    </citation>
    <scope>NUCLEOTIDE SEQUENCE [LARGE SCALE MRNA]</scope>
    <source>
        <strain>FVB/N</strain>
        <tissue>Mammary tumor</tissue>
        <tissue>Testis</tissue>
    </source>
</reference>
<reference key="4">
    <citation type="journal article" date="2008" name="J. Biol. Chem.">
        <title>A novel germ cell-specific protein, SHIP1, forms a complex with chromatin remodeling activity during spermatogenesis.</title>
        <authorList>
            <person name="Choi E."/>
            <person name="Han C."/>
            <person name="Park I."/>
            <person name="Lee B."/>
            <person name="Jin S."/>
            <person name="Choi H."/>
            <person name="Kim do H."/>
            <person name="Park Z.Y."/>
            <person name="Eddy E.M."/>
            <person name="Cho C."/>
        </authorList>
    </citation>
    <scope>INTERACTION WITH ZNF541</scope>
</reference>
<reference key="5">
    <citation type="journal article" date="2010" name="Cell">
        <title>A tissue-specific atlas of mouse protein phosphorylation and expression.</title>
        <authorList>
            <person name="Huttlin E.L."/>
            <person name="Jedrychowski M.P."/>
            <person name="Elias J.E."/>
            <person name="Goswami T."/>
            <person name="Rad R."/>
            <person name="Beausoleil S.A."/>
            <person name="Villen J."/>
            <person name="Haas W."/>
            <person name="Sowa M.E."/>
            <person name="Gygi S.P."/>
        </authorList>
    </citation>
    <scope>IDENTIFICATION BY MASS SPECTROMETRY [LARGE SCALE ANALYSIS]</scope>
    <source>
        <tissue>Brain</tissue>
        <tissue>Heart</tissue>
        <tissue>Kidney</tissue>
        <tissue>Lung</tissue>
        <tissue>Spleen</tissue>
        <tissue>Testis</tissue>
    </source>
</reference>
<reference key="6">
    <citation type="journal article" date="2010" name="Proc. Natl. Acad. Sci. U.S.A.">
        <title>MOV10L1 is necessary for protection of spermatocytes against retrotransposons by Piwi-interacting RNAs.</title>
        <authorList>
            <person name="Frost R.J."/>
            <person name="Hamra F.K."/>
            <person name="Richardson J.A."/>
            <person name="Qi X."/>
            <person name="Bassel-Duby R."/>
            <person name="Olson E.N."/>
        </authorList>
    </citation>
    <scope>INTERACTION WITH MOV10L1</scope>
</reference>
<reference key="7">
    <citation type="journal article" date="2011" name="Nat. Commun.">
        <title>A novel gene required for male fertility and functional CATSPER channel formation in spermatozoa.</title>
        <authorList>
            <person name="Chung J.J."/>
            <person name="Navarro B."/>
            <person name="Krapivinsky G."/>
            <person name="Krapivinsky L."/>
            <person name="Clapham D.E."/>
        </authorList>
    </citation>
    <scope>IDENTIFICATION IN THE CATSPER COMPLEX</scope>
    <source>
        <strain>C57BL/6J</strain>
    </source>
</reference>
<reference key="8">
    <citation type="journal article" date="2012" name="PLoS Genet.">
        <title>RAB-like 2 has an essential role in male fertility, sperm intra-flagellar transport, and tail assembly.</title>
        <authorList>
            <person name="Lo J.C."/>
            <person name="Jamsai D."/>
            <person name="O'Connor A.E."/>
            <person name="Borg C."/>
            <person name="Clark B.J."/>
            <person name="Whisstock J.C."/>
            <person name="Field M.C."/>
            <person name="Adams V."/>
            <person name="Ishikawa T."/>
            <person name="Aitken R.J."/>
            <person name="Whittle B."/>
            <person name="Goodnow C.C."/>
            <person name="Ormandy C.J."/>
            <person name="O'Bryan M.K."/>
        </authorList>
    </citation>
    <scope>INTERACTION WITH RABL2</scope>
    <scope>TISSUE SPECIFICITY</scope>
</reference>
<reference key="9">
    <citation type="journal article" date="2014" name="Mol. Hum. Reprod.">
        <title>SHCBP1L, a conserved protein in mammals, is predominantly expressed in male germ cells and maintains spindle stability during meiosis in testis.</title>
        <authorList>
            <person name="Liu M."/>
            <person name="Shi X."/>
            <person name="Bi Y."/>
            <person name="Qi L."/>
            <person name="Guo X."/>
            <person name="Wang L."/>
            <person name="Zhou Z."/>
            <person name="Sha J."/>
        </authorList>
    </citation>
    <scope>FUNCTION</scope>
    <scope>INTERACTION WITH SHCBP1L</scope>
    <scope>SUBCELLULAR LOCATION</scope>
    <scope>TISSUE SPECIFICITY</scope>
</reference>
<organism>
    <name type="scientific">Mus musculus</name>
    <name type="common">Mouse</name>
    <dbReference type="NCBI Taxonomy" id="10090"/>
    <lineage>
        <taxon>Eukaryota</taxon>
        <taxon>Metazoa</taxon>
        <taxon>Chordata</taxon>
        <taxon>Craniata</taxon>
        <taxon>Vertebrata</taxon>
        <taxon>Euteleostomi</taxon>
        <taxon>Mammalia</taxon>
        <taxon>Eutheria</taxon>
        <taxon>Euarchontoglires</taxon>
        <taxon>Glires</taxon>
        <taxon>Rodentia</taxon>
        <taxon>Myomorpha</taxon>
        <taxon>Muroidea</taxon>
        <taxon>Muridae</taxon>
        <taxon>Murinae</taxon>
        <taxon>Mus</taxon>
        <taxon>Mus</taxon>
    </lineage>
</organism>
<accession>P17156</accession>
<accession>Q99KD7</accession>
<keyword id="KW-0067">ATP-binding</keyword>
<keyword id="KW-0143">Chaperone</keyword>
<keyword id="KW-0963">Cytoplasm</keyword>
<keyword id="KW-0206">Cytoskeleton</keyword>
<keyword id="KW-0221">Differentiation</keyword>
<keyword id="KW-0488">Methylation</keyword>
<keyword id="KW-0547">Nucleotide-binding</keyword>
<keyword id="KW-0597">Phosphoprotein</keyword>
<keyword id="KW-1185">Reference proteome</keyword>
<keyword id="KW-0744">Spermatogenesis</keyword>
<keyword id="KW-0346">Stress response</keyword>
<dbReference type="EMBL" id="M20567">
    <property type="protein sequence ID" value="AAA37859.1"/>
    <property type="molecule type" value="Genomic_DNA"/>
</dbReference>
<dbReference type="EMBL" id="CH466526">
    <property type="protein sequence ID" value="EDL36460.1"/>
    <property type="molecule type" value="Genomic_DNA"/>
</dbReference>
<dbReference type="EMBL" id="BC004714">
    <property type="protein sequence ID" value="AAH04714.1"/>
    <property type="molecule type" value="mRNA"/>
</dbReference>
<dbReference type="EMBL" id="BC052350">
    <property type="protein sequence ID" value="AAH52350.1"/>
    <property type="molecule type" value="mRNA"/>
</dbReference>
<dbReference type="CCDS" id="CCDS25993.1"/>
<dbReference type="PIR" id="S10859">
    <property type="entry name" value="S10859"/>
</dbReference>
<dbReference type="RefSeq" id="NP_001002012.1">
    <property type="nucleotide sequence ID" value="NM_001002012.2"/>
</dbReference>
<dbReference type="RefSeq" id="NP_001396500.1">
    <property type="nucleotide sequence ID" value="NM_001409571.1"/>
</dbReference>
<dbReference type="RefSeq" id="NP_001396501.1">
    <property type="nucleotide sequence ID" value="NM_001409572.1"/>
</dbReference>
<dbReference type="RefSeq" id="NP_032327.2">
    <property type="nucleotide sequence ID" value="NM_008301.4"/>
</dbReference>
<dbReference type="RefSeq" id="XP_006515547.1">
    <property type="nucleotide sequence ID" value="XM_006515484.3"/>
</dbReference>
<dbReference type="SMR" id="P17156"/>
<dbReference type="BioGRID" id="200453">
    <property type="interactions" value="42"/>
</dbReference>
<dbReference type="CORUM" id="P17156"/>
<dbReference type="DIP" id="DIP-42071N"/>
<dbReference type="ELM" id="P17156"/>
<dbReference type="FunCoup" id="P17156">
    <property type="interactions" value="2144"/>
</dbReference>
<dbReference type="IntAct" id="P17156">
    <property type="interactions" value="10"/>
</dbReference>
<dbReference type="MINT" id="P17156"/>
<dbReference type="STRING" id="10090.ENSMUSP00000151408"/>
<dbReference type="GlyGen" id="P17156">
    <property type="glycosylation" value="2 sites, 2 N-linked glycans (2 sites)"/>
</dbReference>
<dbReference type="iPTMnet" id="P17156"/>
<dbReference type="PhosphoSitePlus" id="P17156"/>
<dbReference type="SwissPalm" id="P17156"/>
<dbReference type="REPRODUCTION-2DPAGE" id="IPI00331546"/>
<dbReference type="REPRODUCTION-2DPAGE" id="P17156"/>
<dbReference type="jPOST" id="P17156"/>
<dbReference type="PaxDb" id="10090-ENSMUSP00000079306"/>
<dbReference type="PeptideAtlas" id="P17156"/>
<dbReference type="ProteomicsDB" id="273194"/>
<dbReference type="Pumba" id="P17156"/>
<dbReference type="Antibodypedia" id="6">
    <property type="antibodies" value="278 antibodies from 35 providers"/>
</dbReference>
<dbReference type="DNASU" id="15512"/>
<dbReference type="Ensembl" id="ENSMUST00000080449.7">
    <property type="protein sequence ID" value="ENSMUSP00000079306.6"/>
    <property type="gene ID" value="ENSMUSG00000059970.8"/>
</dbReference>
<dbReference type="Ensembl" id="ENSMUST00000219555.2">
    <property type="protein sequence ID" value="ENSMUSP00000151408.2"/>
    <property type="gene ID" value="ENSMUSG00000059970.8"/>
</dbReference>
<dbReference type="GeneID" id="15512"/>
<dbReference type="KEGG" id="mmu:15512"/>
<dbReference type="UCSC" id="uc007nyf.1">
    <property type="organism name" value="mouse"/>
</dbReference>
<dbReference type="AGR" id="MGI:96243"/>
<dbReference type="CTD" id="3306"/>
<dbReference type="MGI" id="MGI:96243">
    <property type="gene designation" value="Hspa2"/>
</dbReference>
<dbReference type="VEuPathDB" id="HostDB:ENSMUSG00000059970"/>
<dbReference type="eggNOG" id="KOG0101">
    <property type="taxonomic scope" value="Eukaryota"/>
</dbReference>
<dbReference type="GeneTree" id="ENSGT00940000154813"/>
<dbReference type="HOGENOM" id="CLU_005965_3_0_1"/>
<dbReference type="InParanoid" id="P17156"/>
<dbReference type="OMA" id="SYAYNIK"/>
<dbReference type="OrthoDB" id="2401965at2759"/>
<dbReference type="PhylomeDB" id="P17156"/>
<dbReference type="TreeFam" id="TF105042"/>
<dbReference type="Reactome" id="R-MMU-3371453">
    <property type="pathway name" value="Regulation of HSF1-mediated heat shock response"/>
</dbReference>
<dbReference type="Reactome" id="R-MMU-3371497">
    <property type="pathway name" value="HSP90 chaperone cycle for steroid hormone receptors (SHR) in the presence of ligand"/>
</dbReference>
<dbReference type="Reactome" id="R-MMU-3371568">
    <property type="pathway name" value="Attenuation phase"/>
</dbReference>
<dbReference type="Reactome" id="R-MMU-9833482">
    <property type="pathway name" value="PKR-mediated signaling"/>
</dbReference>
<dbReference type="BioGRID-ORCS" id="15512">
    <property type="hits" value="2 hits in 77 CRISPR screens"/>
</dbReference>
<dbReference type="CD-CODE" id="CE726F99">
    <property type="entry name" value="Postsynaptic density"/>
</dbReference>
<dbReference type="CD-CODE" id="DE1E139C">
    <property type="entry name" value="Chromatoid body"/>
</dbReference>
<dbReference type="ChiTaRS" id="Hspa2">
    <property type="organism name" value="mouse"/>
</dbReference>
<dbReference type="PRO" id="PR:P17156"/>
<dbReference type="Proteomes" id="UP000000589">
    <property type="component" value="Chromosome 12"/>
</dbReference>
<dbReference type="RNAct" id="P17156">
    <property type="molecule type" value="protein"/>
</dbReference>
<dbReference type="Bgee" id="ENSMUSG00000059970">
    <property type="expression patterns" value="Expressed in seminiferous tubule of testis and 223 other cell types or tissues"/>
</dbReference>
<dbReference type="GO" id="GO:0036128">
    <property type="term" value="C:CatSper complex"/>
    <property type="evidence" value="ECO:0000314"/>
    <property type="project" value="UniProtKB"/>
</dbReference>
<dbReference type="GO" id="GO:0009986">
    <property type="term" value="C:cell surface"/>
    <property type="evidence" value="ECO:0000314"/>
    <property type="project" value="MGI"/>
</dbReference>
<dbReference type="GO" id="GO:0005829">
    <property type="term" value="C:cytosol"/>
    <property type="evidence" value="ECO:0007669"/>
    <property type="project" value="Ensembl"/>
</dbReference>
<dbReference type="GO" id="GO:0001673">
    <property type="term" value="C:male germ cell nucleus"/>
    <property type="evidence" value="ECO:0000314"/>
    <property type="project" value="MGI"/>
</dbReference>
<dbReference type="GO" id="GO:0072687">
    <property type="term" value="C:meiotic spindle"/>
    <property type="evidence" value="ECO:0000314"/>
    <property type="project" value="UniProtKB"/>
</dbReference>
<dbReference type="GO" id="GO:0005739">
    <property type="term" value="C:mitochondrion"/>
    <property type="evidence" value="ECO:0007005"/>
    <property type="project" value="MGI"/>
</dbReference>
<dbReference type="GO" id="GO:0043209">
    <property type="term" value="C:myelin sheath"/>
    <property type="evidence" value="ECO:0007005"/>
    <property type="project" value="UniProtKB"/>
</dbReference>
<dbReference type="GO" id="GO:0005654">
    <property type="term" value="C:nucleoplasm"/>
    <property type="evidence" value="ECO:0000304"/>
    <property type="project" value="Reactome"/>
</dbReference>
<dbReference type="GO" id="GO:0000795">
    <property type="term" value="C:synaptonemal complex"/>
    <property type="evidence" value="ECO:0000314"/>
    <property type="project" value="MGI"/>
</dbReference>
<dbReference type="GO" id="GO:0005524">
    <property type="term" value="F:ATP binding"/>
    <property type="evidence" value="ECO:0007669"/>
    <property type="project" value="UniProtKB-KW"/>
</dbReference>
<dbReference type="GO" id="GO:0140662">
    <property type="term" value="F:ATP-dependent protein folding chaperone"/>
    <property type="evidence" value="ECO:0007669"/>
    <property type="project" value="InterPro"/>
</dbReference>
<dbReference type="GO" id="GO:0097718">
    <property type="term" value="F:disordered domain specific binding"/>
    <property type="evidence" value="ECO:0007669"/>
    <property type="project" value="Ensembl"/>
</dbReference>
<dbReference type="GO" id="GO:0019899">
    <property type="term" value="F:enzyme binding"/>
    <property type="evidence" value="ECO:0007669"/>
    <property type="project" value="Ensembl"/>
</dbReference>
<dbReference type="GO" id="GO:0051861">
    <property type="term" value="F:glycolipid binding"/>
    <property type="evidence" value="ECO:0000314"/>
    <property type="project" value="MGI"/>
</dbReference>
<dbReference type="GO" id="GO:0051087">
    <property type="term" value="F:protein-folding chaperone binding"/>
    <property type="evidence" value="ECO:0007669"/>
    <property type="project" value="Ensembl"/>
</dbReference>
<dbReference type="GO" id="GO:0048156">
    <property type="term" value="F:tau protein binding"/>
    <property type="evidence" value="ECO:0007669"/>
    <property type="project" value="Ensembl"/>
</dbReference>
<dbReference type="GO" id="GO:0051082">
    <property type="term" value="F:unfolded protein binding"/>
    <property type="evidence" value="ECO:0007669"/>
    <property type="project" value="Ensembl"/>
</dbReference>
<dbReference type="GO" id="GO:0007141">
    <property type="term" value="P:male meiosis I"/>
    <property type="evidence" value="ECO:0000315"/>
    <property type="project" value="MGI"/>
</dbReference>
<dbReference type="GO" id="GO:0007140">
    <property type="term" value="P:male meiotic nuclear division"/>
    <property type="evidence" value="ECO:0000315"/>
    <property type="project" value="MGI"/>
</dbReference>
<dbReference type="GO" id="GO:0090084">
    <property type="term" value="P:negative regulation of inclusion body assembly"/>
    <property type="evidence" value="ECO:0007669"/>
    <property type="project" value="Ensembl"/>
</dbReference>
<dbReference type="GO" id="GO:0032781">
    <property type="term" value="P:positive regulation of ATP-dependent activity"/>
    <property type="evidence" value="ECO:0000315"/>
    <property type="project" value="CACAO"/>
</dbReference>
<dbReference type="GO" id="GO:1901896">
    <property type="term" value="P:positive regulation of ATPase-coupled calcium transmembrane transporter activity"/>
    <property type="evidence" value="ECO:0000315"/>
    <property type="project" value="CACAO"/>
</dbReference>
<dbReference type="GO" id="GO:0010971">
    <property type="term" value="P:positive regulation of G2/M transition of mitotic cell cycle"/>
    <property type="evidence" value="ECO:0000315"/>
    <property type="project" value="MGI"/>
</dbReference>
<dbReference type="GO" id="GO:0042026">
    <property type="term" value="P:protein refolding"/>
    <property type="evidence" value="ECO:0007669"/>
    <property type="project" value="Ensembl"/>
</dbReference>
<dbReference type="GO" id="GO:0009409">
    <property type="term" value="P:response to cold"/>
    <property type="evidence" value="ECO:0000250"/>
    <property type="project" value="AgBase"/>
</dbReference>
<dbReference type="GO" id="GO:0009408">
    <property type="term" value="P:response to heat"/>
    <property type="evidence" value="ECO:0000250"/>
    <property type="project" value="AgBase"/>
</dbReference>
<dbReference type="GO" id="GO:0007286">
    <property type="term" value="P:spermatid development"/>
    <property type="evidence" value="ECO:0000315"/>
    <property type="project" value="MGI"/>
</dbReference>
<dbReference type="GO" id="GO:0007283">
    <property type="term" value="P:spermatogenesis"/>
    <property type="evidence" value="ECO:0000315"/>
    <property type="project" value="UniProtKB"/>
</dbReference>
<dbReference type="GO" id="GO:0070194">
    <property type="term" value="P:synaptonemal complex disassembly"/>
    <property type="evidence" value="ECO:0000315"/>
    <property type="project" value="MGI"/>
</dbReference>
<dbReference type="CDD" id="cd10233">
    <property type="entry name" value="ASKHA_NBD_HSP70_HSPA1"/>
    <property type="match status" value="1"/>
</dbReference>
<dbReference type="FunFam" id="2.60.34.10:FF:000002">
    <property type="entry name" value="Heat shock 70 kDa"/>
    <property type="match status" value="1"/>
</dbReference>
<dbReference type="FunFam" id="3.30.420.40:FF:000172">
    <property type="entry name" value="Heat shock 70 kDa protein"/>
    <property type="match status" value="1"/>
</dbReference>
<dbReference type="FunFam" id="3.90.640.10:FF:000058">
    <property type="entry name" value="Heat shock 70 kDa protein"/>
    <property type="match status" value="1"/>
</dbReference>
<dbReference type="FunFam" id="1.20.1270.10:FF:000010">
    <property type="entry name" value="Heat shock 70 kDa protein 2"/>
    <property type="match status" value="1"/>
</dbReference>
<dbReference type="FunFam" id="3.30.30.30:FF:000001">
    <property type="entry name" value="heat shock 70 kDa protein-like"/>
    <property type="match status" value="1"/>
</dbReference>
<dbReference type="FunFam" id="3.30.420.40:FF:000135">
    <property type="entry name" value="Heat shock cognate 71 kDa protein"/>
    <property type="match status" value="1"/>
</dbReference>
<dbReference type="FunFam" id="3.30.420.40:FF:000026">
    <property type="entry name" value="Heat shock protein 70"/>
    <property type="match status" value="1"/>
</dbReference>
<dbReference type="Gene3D" id="1.20.1270.10">
    <property type="match status" value="1"/>
</dbReference>
<dbReference type="Gene3D" id="3.30.30.30">
    <property type="match status" value="1"/>
</dbReference>
<dbReference type="Gene3D" id="3.30.420.40">
    <property type="match status" value="2"/>
</dbReference>
<dbReference type="Gene3D" id="3.90.640.10">
    <property type="entry name" value="Actin, Chain A, domain 4"/>
    <property type="match status" value="1"/>
</dbReference>
<dbReference type="Gene3D" id="2.60.34.10">
    <property type="entry name" value="Substrate Binding Domain Of DNAk, Chain A, domain 1"/>
    <property type="match status" value="1"/>
</dbReference>
<dbReference type="InterPro" id="IPR043129">
    <property type="entry name" value="ATPase_NBD"/>
</dbReference>
<dbReference type="InterPro" id="IPR018181">
    <property type="entry name" value="Heat_shock_70_CS"/>
</dbReference>
<dbReference type="InterPro" id="IPR029048">
    <property type="entry name" value="HSP70_C_sf"/>
</dbReference>
<dbReference type="InterPro" id="IPR029047">
    <property type="entry name" value="HSP70_peptide-bd_sf"/>
</dbReference>
<dbReference type="InterPro" id="IPR013126">
    <property type="entry name" value="Hsp_70_fam"/>
</dbReference>
<dbReference type="NCBIfam" id="NF001413">
    <property type="entry name" value="PRK00290.1"/>
    <property type="match status" value="1"/>
</dbReference>
<dbReference type="PANTHER" id="PTHR19375">
    <property type="entry name" value="HEAT SHOCK PROTEIN 70KDA"/>
    <property type="match status" value="1"/>
</dbReference>
<dbReference type="Pfam" id="PF00012">
    <property type="entry name" value="HSP70"/>
    <property type="match status" value="1"/>
</dbReference>
<dbReference type="PRINTS" id="PR00301">
    <property type="entry name" value="HEATSHOCK70"/>
</dbReference>
<dbReference type="SUPFAM" id="SSF53067">
    <property type="entry name" value="Actin-like ATPase domain"/>
    <property type="match status" value="2"/>
</dbReference>
<dbReference type="SUPFAM" id="SSF100934">
    <property type="entry name" value="Heat shock protein 70kD (HSP70), C-terminal subdomain"/>
    <property type="match status" value="1"/>
</dbReference>
<dbReference type="SUPFAM" id="SSF100920">
    <property type="entry name" value="Heat shock protein 70kD (HSP70), peptide-binding domain"/>
    <property type="match status" value="1"/>
</dbReference>
<dbReference type="PROSITE" id="PS00297">
    <property type="entry name" value="HSP70_1"/>
    <property type="match status" value="1"/>
</dbReference>
<dbReference type="PROSITE" id="PS00329">
    <property type="entry name" value="HSP70_2"/>
    <property type="match status" value="1"/>
</dbReference>
<dbReference type="PROSITE" id="PS01036">
    <property type="entry name" value="HSP70_3"/>
    <property type="match status" value="1"/>
</dbReference>
<feature type="chain" id="PRO_0000078259" description="Heat shock-related 70 kDa protein 2">
    <location>
        <begin position="1"/>
        <end position="633"/>
    </location>
</feature>
<feature type="region of interest" description="Nucleotide-binding domain (NBD)" evidence="2">
    <location>
        <begin position="2"/>
        <end position="389"/>
    </location>
</feature>
<feature type="region of interest" description="Substrate-binding domain (SBD)" evidence="2">
    <location>
        <begin position="397"/>
        <end position="512"/>
    </location>
</feature>
<feature type="region of interest" description="Disordered" evidence="5">
    <location>
        <begin position="613"/>
        <end position="633"/>
    </location>
</feature>
<feature type="compositionally biased region" description="Gly residues" evidence="5">
    <location>
        <begin position="616"/>
        <end position="625"/>
    </location>
</feature>
<feature type="binding site" evidence="1">
    <location>
        <begin position="13"/>
        <end position="16"/>
    </location>
    <ligand>
        <name>ATP</name>
        <dbReference type="ChEBI" id="CHEBI:30616"/>
    </ligand>
</feature>
<feature type="binding site" evidence="1">
    <location>
        <position position="72"/>
    </location>
    <ligand>
        <name>ATP</name>
        <dbReference type="ChEBI" id="CHEBI:30616"/>
    </ligand>
</feature>
<feature type="binding site" evidence="1">
    <location>
        <begin position="205"/>
        <end position="207"/>
    </location>
    <ligand>
        <name>ATP</name>
        <dbReference type="ChEBI" id="CHEBI:30616"/>
    </ligand>
</feature>
<feature type="binding site" evidence="1">
    <location>
        <begin position="271"/>
        <end position="278"/>
    </location>
    <ligand>
        <name>ATP</name>
        <dbReference type="ChEBI" id="CHEBI:30616"/>
    </ligand>
</feature>
<feature type="binding site" evidence="1">
    <location>
        <begin position="342"/>
        <end position="345"/>
    </location>
    <ligand>
        <name>ATP</name>
        <dbReference type="ChEBI" id="CHEBI:30616"/>
    </ligand>
</feature>
<feature type="modified residue" description="Phosphoserine" evidence="3">
    <location>
        <position position="403"/>
    </location>
</feature>
<feature type="modified residue" description="Phosphothreonine" evidence="3">
    <location>
        <position position="408"/>
    </location>
</feature>
<feature type="modified residue" description="Phosphothreonine" evidence="3">
    <location>
        <position position="414"/>
    </location>
</feature>
<feature type="modified residue" description="N6,N6,N6-trimethyllysine; by METTL21A; in vitro" evidence="4">
    <location>
        <position position="564"/>
    </location>
</feature>
<feature type="sequence conflict" description="In Ref. 1; AAA37859." evidence="12" ref="1">
    <original>A</original>
    <variation>R</variation>
    <location>
        <position position="71"/>
    </location>
</feature>
<feature type="sequence conflict" description="In Ref. 1; AAA37859." evidence="12" ref="1">
    <original>V</original>
    <variation>L</variation>
    <location>
        <position position="222"/>
    </location>
</feature>
<comment type="function">
    <text evidence="4 10">Molecular chaperone implicated in a wide variety of cellular processes, including protection of the proteome from stress, folding and transport of newly synthesized polypeptides, activation of proteolysis of misfolded proteins and the formation and dissociation of protein complexes. Plays a pivotal role in the protein quality control system, ensuring the correct folding of proteins, the re-folding of misfolded proteins and controlling the targeting of proteins for subsequent degradation. This is achieved through cycles of ATP binding, ATP hydrolysis and ADP release, mediated by co-chaperones. The affinity for polypeptides is regulated by its nucleotide bound state. In the ATP-bound form, it has a low affinity for substrate proteins. However, upon hydrolysis of the ATP to ADP, it undergoes a conformational change that increases its affinity for substrate proteins. It goes through repeated cycles of ATP hydrolysis and nucleotide exchange, which permits cycles of substrate binding and release (By similarity). Plays a role in spermatogenesis (PubMed:24557841). In association with SHCBP1L may participate in the maintenance of spindle integrity during meiosis in male germ cells (PubMed:24557841).</text>
</comment>
<comment type="subunit">
    <text evidence="4 6 7 8 9 10">Interacts with FKBP6 (By similarity). Interacts with ZNF541 (PubMed:18849567). Component of the CatSper complex (PubMed:21224844). Interacts with RABL2/RABL2A; binds preferentially to GTP-bound RABL2 (PubMed:23055941). Interacts with SHCBP1L; this interaction may promote the recruitment of HSPA2 to the spindle (PubMed:24557841). Interacts with MOV10L1 (PubMed:20547853).</text>
</comment>
<comment type="subcellular location">
    <subcellularLocation>
        <location evidence="10">Cytoplasm</location>
        <location evidence="10">Cytoskeleton</location>
        <location evidence="10">Spindle</location>
    </subcellularLocation>
    <text evidence="10">Colocalizes with SHCBP1L at spindle during the meiosis process (PubMed:24557841).</text>
</comment>
<comment type="tissue specificity">
    <text evidence="9 10 11">Expressed in male germ cells (at protein level) (PubMed:23055941, PubMed:24557841, PubMed:3405224).</text>
</comment>
<comment type="developmental stage">
    <text evidence="11">Specifically expressed in prophage stage of meiosis (PubMed:3405224).</text>
</comment>
<comment type="domain">
    <text evidence="4">The N-terminal nucleotide binding domain (NBD) (also known as the ATPase domain) is responsible for binding and hydrolyzing ATP. The C-terminal substrate-binding domain (SBD) (also known as peptide-binding domain) binds to the client/substrate proteins. The two domains are allosterically coupled so that, when ATP is bound to the NBD, the SBD binds relatively weakly to clients. When ADP is bound in the NBD, a conformational change enhances the affinity of the SBD for client proteins.</text>
</comment>
<comment type="similarity">
    <text evidence="12">Belongs to the heat shock protein 70 family.</text>
</comment>
<gene>
    <name type="primary">Hspa2</name>
    <name type="synonym">Hcp70.2</name>
    <name type="synonym">Hsp70-2</name>
</gene>
<name>HSP72_MOUSE</name>
<proteinExistence type="evidence at protein level"/>